<organism>
    <name type="scientific">Salmonella schwarzengrund (strain CVM19633)</name>
    <dbReference type="NCBI Taxonomy" id="439843"/>
    <lineage>
        <taxon>Bacteria</taxon>
        <taxon>Pseudomonadati</taxon>
        <taxon>Pseudomonadota</taxon>
        <taxon>Gammaproteobacteria</taxon>
        <taxon>Enterobacterales</taxon>
        <taxon>Enterobacteriaceae</taxon>
        <taxon>Salmonella</taxon>
    </lineage>
</organism>
<feature type="chain" id="PRO_1000089261" description="UPF0060 membrane protein YnfA">
    <location>
        <begin position="1"/>
        <end position="108"/>
    </location>
</feature>
<feature type="topological domain" description="Periplasmic" evidence="1">
    <location>
        <begin position="1"/>
        <end position="5"/>
    </location>
</feature>
<feature type="transmembrane region" description="Helical" evidence="1">
    <location>
        <begin position="6"/>
        <end position="26"/>
    </location>
</feature>
<feature type="topological domain" description="Cytoplasmic" evidence="1">
    <location>
        <begin position="27"/>
        <end position="30"/>
    </location>
</feature>
<feature type="transmembrane region" description="Helical" evidence="1">
    <location>
        <begin position="31"/>
        <end position="51"/>
    </location>
</feature>
<feature type="topological domain" description="Periplasmic" evidence="1">
    <location>
        <begin position="52"/>
        <end position="60"/>
    </location>
</feature>
<feature type="transmembrane region" description="Helical" evidence="1">
    <location>
        <begin position="61"/>
        <end position="81"/>
    </location>
</feature>
<feature type="topological domain" description="Cytoplasmic" evidence="1">
    <location>
        <begin position="82"/>
        <end position="84"/>
    </location>
</feature>
<feature type="transmembrane region" description="Helical" evidence="1">
    <location>
        <begin position="85"/>
        <end position="105"/>
    </location>
</feature>
<feature type="topological domain" description="Periplasmic" evidence="1">
    <location>
        <begin position="106"/>
        <end position="108"/>
    </location>
</feature>
<reference key="1">
    <citation type="journal article" date="2011" name="J. Bacteriol.">
        <title>Comparative genomics of 28 Salmonella enterica isolates: evidence for CRISPR-mediated adaptive sublineage evolution.</title>
        <authorList>
            <person name="Fricke W.F."/>
            <person name="Mammel M.K."/>
            <person name="McDermott P.F."/>
            <person name="Tartera C."/>
            <person name="White D.G."/>
            <person name="Leclerc J.E."/>
            <person name="Ravel J."/>
            <person name="Cebula T.A."/>
        </authorList>
    </citation>
    <scope>NUCLEOTIDE SEQUENCE [LARGE SCALE GENOMIC DNA]</scope>
    <source>
        <strain>CVM19633</strain>
    </source>
</reference>
<evidence type="ECO:0000255" key="1">
    <source>
        <dbReference type="HAMAP-Rule" id="MF_00010"/>
    </source>
</evidence>
<name>YNFA_SALSV</name>
<proteinExistence type="inferred from homology"/>
<gene>
    <name evidence="1" type="primary">ynfA</name>
    <name type="ordered locus">SeSA_A1606</name>
</gene>
<sequence length="108" mass="11980">MLKTTLLFFVTALCEIIGCFLPWLWLKRGASMWWLLPAAASLALFVWLLTLHPAASGRVYAAYGGVYVCTALLWLRVVDGVRLTVYDWCGALIALCGMLIIVVGWGRT</sequence>
<dbReference type="EMBL" id="CP001127">
    <property type="protein sequence ID" value="ACF89882.1"/>
    <property type="molecule type" value="Genomic_DNA"/>
</dbReference>
<dbReference type="RefSeq" id="WP_000921387.1">
    <property type="nucleotide sequence ID" value="NC_011094.1"/>
</dbReference>
<dbReference type="SMR" id="B4TVH1"/>
<dbReference type="KEGG" id="sew:SeSA_A1606"/>
<dbReference type="HOGENOM" id="CLU_117653_2_1_6"/>
<dbReference type="Proteomes" id="UP000001865">
    <property type="component" value="Chromosome"/>
</dbReference>
<dbReference type="GO" id="GO:0005886">
    <property type="term" value="C:plasma membrane"/>
    <property type="evidence" value="ECO:0007669"/>
    <property type="project" value="UniProtKB-SubCell"/>
</dbReference>
<dbReference type="HAMAP" id="MF_00010">
    <property type="entry name" value="UPF0060"/>
    <property type="match status" value="1"/>
</dbReference>
<dbReference type="InterPro" id="IPR003844">
    <property type="entry name" value="UPF0060"/>
</dbReference>
<dbReference type="NCBIfam" id="NF002586">
    <property type="entry name" value="PRK02237.1"/>
    <property type="match status" value="1"/>
</dbReference>
<dbReference type="PANTHER" id="PTHR36116">
    <property type="entry name" value="UPF0060 MEMBRANE PROTEIN YNFA"/>
    <property type="match status" value="1"/>
</dbReference>
<dbReference type="PANTHER" id="PTHR36116:SF1">
    <property type="entry name" value="UPF0060 MEMBRANE PROTEIN YNFA"/>
    <property type="match status" value="1"/>
</dbReference>
<dbReference type="Pfam" id="PF02694">
    <property type="entry name" value="UPF0060"/>
    <property type="match status" value="1"/>
</dbReference>
<dbReference type="SUPFAM" id="SSF103481">
    <property type="entry name" value="Multidrug resistance efflux transporter EmrE"/>
    <property type="match status" value="1"/>
</dbReference>
<accession>B4TVH1</accession>
<protein>
    <recommendedName>
        <fullName evidence="1">UPF0060 membrane protein YnfA</fullName>
    </recommendedName>
</protein>
<comment type="subcellular location">
    <subcellularLocation>
        <location evidence="1">Cell inner membrane</location>
        <topology evidence="1">Multi-pass membrane protein</topology>
    </subcellularLocation>
</comment>
<comment type="similarity">
    <text evidence="1">Belongs to the UPF0060 family.</text>
</comment>
<keyword id="KW-0997">Cell inner membrane</keyword>
<keyword id="KW-1003">Cell membrane</keyword>
<keyword id="KW-0472">Membrane</keyword>
<keyword id="KW-0812">Transmembrane</keyword>
<keyword id="KW-1133">Transmembrane helix</keyword>